<accession>A0R4C9</accession>
<accession>I7GEU4</accession>
<evidence type="ECO:0000250" key="1"/>
<evidence type="ECO:0000255" key="2">
    <source>
        <dbReference type="PROSITE-ProRule" id="PRU00173"/>
    </source>
</evidence>
<evidence type="ECO:0000269" key="3">
    <source>
    </source>
</evidence>
<feature type="chain" id="PRO_0000396108" description="Putative thiosulfate sulfurtransferase">
    <location>
        <begin position="1"/>
        <end position="277"/>
    </location>
</feature>
<feature type="domain" description="Rhodanese 1" evidence="2">
    <location>
        <begin position="18"/>
        <end position="125"/>
    </location>
</feature>
<feature type="domain" description="Rhodanese 2" evidence="2">
    <location>
        <begin position="154"/>
        <end position="274"/>
    </location>
</feature>
<feature type="active site" description="Cysteine persulfide intermediate" evidence="2">
    <location>
        <position position="233"/>
    </location>
</feature>
<feature type="binding site" evidence="1">
    <location>
        <position position="238"/>
    </location>
    <ligand>
        <name>substrate</name>
    </ligand>
</feature>
<feature type="cross-link" description="Isoglutamyl lysine isopeptide (Lys-Gln) (interchain with Q-Cter in protein Pup)" evidence="3">
    <location>
        <position position="67"/>
    </location>
</feature>
<proteinExistence type="evidence at protein level"/>
<comment type="function">
    <text evidence="1">May be a sulfotransferase involved in the formation of thiosulfate.</text>
</comment>
<comment type="catalytic activity">
    <reaction>
        <text>thiosulfate + hydrogen cyanide = thiocyanate + sulfite + 2 H(+)</text>
        <dbReference type="Rhea" id="RHEA:16881"/>
        <dbReference type="ChEBI" id="CHEBI:15378"/>
        <dbReference type="ChEBI" id="CHEBI:17359"/>
        <dbReference type="ChEBI" id="CHEBI:18022"/>
        <dbReference type="ChEBI" id="CHEBI:18407"/>
        <dbReference type="ChEBI" id="CHEBI:33542"/>
        <dbReference type="EC" id="2.8.1.1"/>
    </reaction>
</comment>
<comment type="domain">
    <text evidence="1">Contains two rhodanese domains with different primary structures but with near identical secondary structure conformations suggesting a common evolutionary origin. Only the C-terminal rhodanese domain contains the catalytic cysteine residue (By similarity).</text>
</comment>
<protein>
    <recommendedName>
        <fullName>Putative thiosulfate sulfurtransferase</fullName>
        <ecNumber>2.8.1.1</ecNumber>
    </recommendedName>
    <alternativeName>
        <fullName>Rhodanese-like protein</fullName>
    </alternativeName>
</protein>
<dbReference type="EC" id="2.8.1.1"/>
<dbReference type="EMBL" id="CP000480">
    <property type="protein sequence ID" value="ABK74971.1"/>
    <property type="molecule type" value="Genomic_DNA"/>
</dbReference>
<dbReference type="EMBL" id="CP001663">
    <property type="protein sequence ID" value="AFP42071.1"/>
    <property type="molecule type" value="Genomic_DNA"/>
</dbReference>
<dbReference type="RefSeq" id="WP_011730790.1">
    <property type="nucleotide sequence ID" value="NZ_SIJM01000007.1"/>
</dbReference>
<dbReference type="RefSeq" id="YP_890017.1">
    <property type="nucleotide sequence ID" value="NC_008596.1"/>
</dbReference>
<dbReference type="SMR" id="A0R4C9"/>
<dbReference type="STRING" id="246196.MSMEG_5789"/>
<dbReference type="PaxDb" id="246196-MSMEI_5636"/>
<dbReference type="KEGG" id="msb:LJ00_28625"/>
<dbReference type="KEGG" id="msg:MSMEI_5636"/>
<dbReference type="KEGG" id="msm:MSMEG_5789"/>
<dbReference type="PATRIC" id="fig|246196.19.peg.5634"/>
<dbReference type="eggNOG" id="COG2897">
    <property type="taxonomic scope" value="Bacteria"/>
</dbReference>
<dbReference type="OrthoDB" id="9781034at2"/>
<dbReference type="Proteomes" id="UP000000757">
    <property type="component" value="Chromosome"/>
</dbReference>
<dbReference type="Proteomes" id="UP000006158">
    <property type="component" value="Chromosome"/>
</dbReference>
<dbReference type="GO" id="GO:0004792">
    <property type="term" value="F:thiosulfate-cyanide sulfurtransferase activity"/>
    <property type="evidence" value="ECO:0007669"/>
    <property type="project" value="UniProtKB-EC"/>
</dbReference>
<dbReference type="CDD" id="cd01448">
    <property type="entry name" value="TST_Repeat_1"/>
    <property type="match status" value="1"/>
</dbReference>
<dbReference type="CDD" id="cd01449">
    <property type="entry name" value="TST_Repeat_2"/>
    <property type="match status" value="1"/>
</dbReference>
<dbReference type="FunFam" id="3.40.250.10:FF:000024">
    <property type="entry name" value="Sulfurtransferase"/>
    <property type="match status" value="1"/>
</dbReference>
<dbReference type="Gene3D" id="3.40.250.10">
    <property type="entry name" value="Rhodanese-like domain"/>
    <property type="match status" value="2"/>
</dbReference>
<dbReference type="InterPro" id="IPR001763">
    <property type="entry name" value="Rhodanese-like_dom"/>
</dbReference>
<dbReference type="InterPro" id="IPR036873">
    <property type="entry name" value="Rhodanese-like_dom_sf"/>
</dbReference>
<dbReference type="InterPro" id="IPR051126">
    <property type="entry name" value="Thiosulfate_sulfurtransferase"/>
</dbReference>
<dbReference type="InterPro" id="IPR001307">
    <property type="entry name" value="Thiosulphate_STrfase_CS"/>
</dbReference>
<dbReference type="PANTHER" id="PTHR43855">
    <property type="entry name" value="THIOSULFATE SULFURTRANSFERASE"/>
    <property type="match status" value="1"/>
</dbReference>
<dbReference type="PANTHER" id="PTHR43855:SF1">
    <property type="entry name" value="THIOSULFATE SULFURTRANSFERASE"/>
    <property type="match status" value="1"/>
</dbReference>
<dbReference type="Pfam" id="PF00581">
    <property type="entry name" value="Rhodanese"/>
    <property type="match status" value="2"/>
</dbReference>
<dbReference type="SMART" id="SM00450">
    <property type="entry name" value="RHOD"/>
    <property type="match status" value="2"/>
</dbReference>
<dbReference type="SUPFAM" id="SSF52821">
    <property type="entry name" value="Rhodanese/Cell cycle control phosphatase"/>
    <property type="match status" value="2"/>
</dbReference>
<dbReference type="PROSITE" id="PS00683">
    <property type="entry name" value="RHODANESE_2"/>
    <property type="match status" value="1"/>
</dbReference>
<dbReference type="PROSITE" id="PS50206">
    <property type="entry name" value="RHODANESE_3"/>
    <property type="match status" value="2"/>
</dbReference>
<sequence length="277" mass="30985">MARSDVLVSTDWAESNLKAPKTVFVEVDEDTSAYDTGHIEGAVKLDWKTDLQDPIRRDFVDAQQFSKLLSERGIANDDTVILYGGNNNWFAAYAYWYFKLYGHQDVKLLDGGRKKWELDARPLSAEKVERPQTSYTAKEPDNSIRAFRDEVIAAIGTKNLVDVRSPDEFSGKILAPAHLPQEQSQRPGHIPGAINVPWSKAANEDGTFKSDEELAKLYAEAGLDGEKETIAYCRIGERSSHTWFVLQELLGHKNVKNYDGSWTEYGSLVGAPIELGS</sequence>
<reference key="1">
    <citation type="submission" date="2006-10" db="EMBL/GenBank/DDBJ databases">
        <authorList>
            <person name="Fleischmann R.D."/>
            <person name="Dodson R.J."/>
            <person name="Haft D.H."/>
            <person name="Merkel J.S."/>
            <person name="Nelson W.C."/>
            <person name="Fraser C.M."/>
        </authorList>
    </citation>
    <scope>NUCLEOTIDE SEQUENCE [LARGE SCALE GENOMIC DNA]</scope>
    <source>
        <strain>ATCC 700084 / mc(2)155</strain>
    </source>
</reference>
<reference key="2">
    <citation type="journal article" date="2007" name="Genome Biol.">
        <title>Interrupted coding sequences in Mycobacterium smegmatis: authentic mutations or sequencing errors?</title>
        <authorList>
            <person name="Deshayes C."/>
            <person name="Perrodou E."/>
            <person name="Gallien S."/>
            <person name="Euphrasie D."/>
            <person name="Schaeffer C."/>
            <person name="Van-Dorsselaer A."/>
            <person name="Poch O."/>
            <person name="Lecompte O."/>
            <person name="Reyrat J.-M."/>
        </authorList>
    </citation>
    <scope>NUCLEOTIDE SEQUENCE [LARGE SCALE GENOMIC DNA]</scope>
    <source>
        <strain>ATCC 700084 / mc(2)155</strain>
    </source>
</reference>
<reference key="3">
    <citation type="journal article" date="2009" name="Genome Res.">
        <title>Ortho-proteogenomics: multiple proteomes investigation through orthology and a new MS-based protocol.</title>
        <authorList>
            <person name="Gallien S."/>
            <person name="Perrodou E."/>
            <person name="Carapito C."/>
            <person name="Deshayes C."/>
            <person name="Reyrat J.-M."/>
            <person name="Van Dorsselaer A."/>
            <person name="Poch O."/>
            <person name="Schaeffer C."/>
            <person name="Lecompte O."/>
        </authorList>
    </citation>
    <scope>NUCLEOTIDE SEQUENCE [LARGE SCALE GENOMIC DNA]</scope>
    <source>
        <strain>ATCC 700084 / mc(2)155</strain>
    </source>
</reference>
<reference key="4">
    <citation type="journal article" date="2010" name="Mol. Biosyst.">
        <title>Expansion of the mycobacterial 'PUPylome'.</title>
        <authorList>
            <person name="Watrous J."/>
            <person name="Burns K."/>
            <person name="Liu W.T."/>
            <person name="Patel A."/>
            <person name="Hook V."/>
            <person name="Bafna V."/>
            <person name="Barry C.E. III"/>
            <person name="Bark S."/>
            <person name="Dorrestein P.C."/>
        </authorList>
    </citation>
    <scope>PUPYLATION AT LYS-67</scope>
    <scope>IDENTIFICATION BY MASS SPECTROMETRY</scope>
</reference>
<gene>
    <name type="ordered locus">MSMEG_5789</name>
    <name type="ordered locus">MSMEI_5636</name>
</gene>
<keyword id="KW-1017">Isopeptide bond</keyword>
<keyword id="KW-1185">Reference proteome</keyword>
<keyword id="KW-0677">Repeat</keyword>
<keyword id="KW-0808">Transferase</keyword>
<keyword id="KW-0832">Ubl conjugation</keyword>
<name>THTR_MYCS2</name>
<organism>
    <name type="scientific">Mycolicibacterium smegmatis (strain ATCC 700084 / mc(2)155)</name>
    <name type="common">Mycobacterium smegmatis</name>
    <dbReference type="NCBI Taxonomy" id="246196"/>
    <lineage>
        <taxon>Bacteria</taxon>
        <taxon>Bacillati</taxon>
        <taxon>Actinomycetota</taxon>
        <taxon>Actinomycetes</taxon>
        <taxon>Mycobacteriales</taxon>
        <taxon>Mycobacteriaceae</taxon>
        <taxon>Mycolicibacterium</taxon>
    </lineage>
</organism>